<protein>
    <recommendedName>
        <fullName evidence="1">Type III pantothenate kinase</fullName>
        <ecNumber evidence="1">2.7.1.33</ecNumber>
    </recommendedName>
    <alternativeName>
        <fullName evidence="1">PanK-III</fullName>
    </alternativeName>
    <alternativeName>
        <fullName evidence="1">Pantothenic acid kinase</fullName>
    </alternativeName>
</protein>
<comment type="function">
    <text evidence="1">Catalyzes the phosphorylation of pantothenate (Pan), the first step in CoA biosynthesis.</text>
</comment>
<comment type="catalytic activity">
    <reaction evidence="1">
        <text>(R)-pantothenate + ATP = (R)-4'-phosphopantothenate + ADP + H(+)</text>
        <dbReference type="Rhea" id="RHEA:16373"/>
        <dbReference type="ChEBI" id="CHEBI:10986"/>
        <dbReference type="ChEBI" id="CHEBI:15378"/>
        <dbReference type="ChEBI" id="CHEBI:29032"/>
        <dbReference type="ChEBI" id="CHEBI:30616"/>
        <dbReference type="ChEBI" id="CHEBI:456216"/>
        <dbReference type="EC" id="2.7.1.33"/>
    </reaction>
</comment>
<comment type="cofactor">
    <cofactor evidence="1">
        <name>NH4(+)</name>
        <dbReference type="ChEBI" id="CHEBI:28938"/>
    </cofactor>
    <cofactor evidence="1">
        <name>K(+)</name>
        <dbReference type="ChEBI" id="CHEBI:29103"/>
    </cofactor>
    <text evidence="1">A monovalent cation. Ammonium or potassium.</text>
</comment>
<comment type="pathway">
    <text evidence="1">Cofactor biosynthesis; coenzyme A biosynthesis; CoA from (R)-pantothenate: step 1/5.</text>
</comment>
<comment type="subunit">
    <text evidence="1">Homodimer.</text>
</comment>
<comment type="subcellular location">
    <subcellularLocation>
        <location evidence="1">Cytoplasm</location>
    </subcellularLocation>
</comment>
<comment type="similarity">
    <text evidence="1">Belongs to the type III pantothenate kinase family.</text>
</comment>
<feature type="chain" id="PRO_0000267511" description="Type III pantothenate kinase">
    <location>
        <begin position="1"/>
        <end position="256"/>
    </location>
</feature>
<feature type="active site" description="Proton acceptor" evidence="1">
    <location>
        <position position="109"/>
    </location>
</feature>
<feature type="binding site" evidence="1">
    <location>
        <begin position="6"/>
        <end position="13"/>
    </location>
    <ligand>
        <name>ATP</name>
        <dbReference type="ChEBI" id="CHEBI:30616"/>
    </ligand>
</feature>
<feature type="binding site" evidence="1">
    <location>
        <position position="100"/>
    </location>
    <ligand>
        <name>substrate</name>
    </ligand>
</feature>
<feature type="binding site" evidence="1">
    <location>
        <begin position="107"/>
        <end position="110"/>
    </location>
    <ligand>
        <name>substrate</name>
    </ligand>
</feature>
<feature type="binding site" evidence="1">
    <location>
        <position position="129"/>
    </location>
    <ligand>
        <name>K(+)</name>
        <dbReference type="ChEBI" id="CHEBI:29103"/>
    </ligand>
</feature>
<feature type="binding site" evidence="1">
    <location>
        <position position="132"/>
    </location>
    <ligand>
        <name>ATP</name>
        <dbReference type="ChEBI" id="CHEBI:30616"/>
    </ligand>
</feature>
<feature type="binding site" evidence="1">
    <location>
        <position position="184"/>
    </location>
    <ligand>
        <name>substrate</name>
    </ligand>
</feature>
<sequence length="256" mass="27939">MLLVFDVGNTNMVLGIYKGDKLVNYWRIKTDREKTSDEYGILISNLFDYDNVNISDIDDVIISSVVPNVMHSLENFCIKYCKKQPLIVGPGIKTGLNIKYDNPKQVGADRIVNAVAGIEKYGAPSILVDFGTATTFCAISEKGEYLGGTIAPGIKISSEALFQSASKLPRVELAKPGMTICKSTVSAMQSGIIYGYVGLVDKIISIMKKELNCDDVKVIATGGLAKLIASETKSIDYVDGFLTLEGLRIIYEKNQE</sequence>
<accession>Q181F7</accession>
<organism>
    <name type="scientific">Clostridioides difficile (strain 630)</name>
    <name type="common">Peptoclostridium difficile</name>
    <dbReference type="NCBI Taxonomy" id="272563"/>
    <lineage>
        <taxon>Bacteria</taxon>
        <taxon>Bacillati</taxon>
        <taxon>Bacillota</taxon>
        <taxon>Clostridia</taxon>
        <taxon>Peptostreptococcales</taxon>
        <taxon>Peptostreptococcaceae</taxon>
        <taxon>Clostridioides</taxon>
    </lineage>
</organism>
<name>COAX_CLOD6</name>
<dbReference type="EC" id="2.7.1.33" evidence="1"/>
<dbReference type="EMBL" id="AM180355">
    <property type="protein sequence ID" value="CAJ70461.1"/>
    <property type="molecule type" value="Genomic_DNA"/>
</dbReference>
<dbReference type="RefSeq" id="WP_011861999.1">
    <property type="nucleotide sequence ID" value="NZ_JAUPES010000007.1"/>
</dbReference>
<dbReference type="RefSeq" id="YP_001090078.1">
    <property type="nucleotide sequence ID" value="NC_009089.1"/>
</dbReference>
<dbReference type="SMR" id="Q181F7"/>
<dbReference type="STRING" id="272563.CD630_35550"/>
<dbReference type="EnsemblBacteria" id="CAJ70461">
    <property type="protein sequence ID" value="CAJ70461"/>
    <property type="gene ID" value="CD630_35550"/>
</dbReference>
<dbReference type="KEGG" id="cdf:CD630_35550"/>
<dbReference type="KEGG" id="pdc:CDIF630_03875"/>
<dbReference type="PATRIC" id="fig|272563.120.peg.3758"/>
<dbReference type="eggNOG" id="COG1521">
    <property type="taxonomic scope" value="Bacteria"/>
</dbReference>
<dbReference type="OrthoDB" id="9804707at2"/>
<dbReference type="PhylomeDB" id="Q181F7"/>
<dbReference type="BioCyc" id="PDIF272563:G12WB-3741-MONOMER"/>
<dbReference type="UniPathway" id="UPA00241">
    <property type="reaction ID" value="UER00352"/>
</dbReference>
<dbReference type="Proteomes" id="UP000001978">
    <property type="component" value="Chromosome"/>
</dbReference>
<dbReference type="GO" id="GO:0005737">
    <property type="term" value="C:cytoplasm"/>
    <property type="evidence" value="ECO:0007669"/>
    <property type="project" value="UniProtKB-SubCell"/>
</dbReference>
<dbReference type="GO" id="GO:0005524">
    <property type="term" value="F:ATP binding"/>
    <property type="evidence" value="ECO:0007669"/>
    <property type="project" value="UniProtKB-UniRule"/>
</dbReference>
<dbReference type="GO" id="GO:0046872">
    <property type="term" value="F:metal ion binding"/>
    <property type="evidence" value="ECO:0007669"/>
    <property type="project" value="UniProtKB-KW"/>
</dbReference>
<dbReference type="GO" id="GO:0004594">
    <property type="term" value="F:pantothenate kinase activity"/>
    <property type="evidence" value="ECO:0007669"/>
    <property type="project" value="UniProtKB-UniRule"/>
</dbReference>
<dbReference type="GO" id="GO:0015937">
    <property type="term" value="P:coenzyme A biosynthetic process"/>
    <property type="evidence" value="ECO:0007669"/>
    <property type="project" value="UniProtKB-UniRule"/>
</dbReference>
<dbReference type="CDD" id="cd24015">
    <property type="entry name" value="ASKHA_NBD_PanK-III"/>
    <property type="match status" value="1"/>
</dbReference>
<dbReference type="Gene3D" id="3.30.420.40">
    <property type="match status" value="2"/>
</dbReference>
<dbReference type="HAMAP" id="MF_01274">
    <property type="entry name" value="Pantothen_kinase_3"/>
    <property type="match status" value="1"/>
</dbReference>
<dbReference type="InterPro" id="IPR043129">
    <property type="entry name" value="ATPase_NBD"/>
</dbReference>
<dbReference type="InterPro" id="IPR004619">
    <property type="entry name" value="Type_III_PanK"/>
</dbReference>
<dbReference type="NCBIfam" id="TIGR00671">
    <property type="entry name" value="baf"/>
    <property type="match status" value="1"/>
</dbReference>
<dbReference type="NCBIfam" id="NF009847">
    <property type="entry name" value="PRK13318.1-5"/>
    <property type="match status" value="1"/>
</dbReference>
<dbReference type="NCBIfam" id="NF009848">
    <property type="entry name" value="PRK13318.1-6"/>
    <property type="match status" value="1"/>
</dbReference>
<dbReference type="NCBIfam" id="NF009855">
    <property type="entry name" value="PRK13321.1"/>
    <property type="match status" value="1"/>
</dbReference>
<dbReference type="PANTHER" id="PTHR34265">
    <property type="entry name" value="TYPE III PANTOTHENATE KINASE"/>
    <property type="match status" value="1"/>
</dbReference>
<dbReference type="PANTHER" id="PTHR34265:SF1">
    <property type="entry name" value="TYPE III PANTOTHENATE KINASE"/>
    <property type="match status" value="1"/>
</dbReference>
<dbReference type="Pfam" id="PF03309">
    <property type="entry name" value="Pan_kinase"/>
    <property type="match status" value="1"/>
</dbReference>
<dbReference type="SUPFAM" id="SSF53067">
    <property type="entry name" value="Actin-like ATPase domain"/>
    <property type="match status" value="2"/>
</dbReference>
<gene>
    <name evidence="1" type="primary">coaX</name>
    <name type="ordered locus">CD630_35550</name>
</gene>
<reference key="1">
    <citation type="journal article" date="2006" name="Nat. Genet.">
        <title>The multidrug-resistant human pathogen Clostridium difficile has a highly mobile, mosaic genome.</title>
        <authorList>
            <person name="Sebaihia M."/>
            <person name="Wren B.W."/>
            <person name="Mullany P."/>
            <person name="Fairweather N.F."/>
            <person name="Minton N."/>
            <person name="Stabler R."/>
            <person name="Thomson N.R."/>
            <person name="Roberts A.P."/>
            <person name="Cerdeno-Tarraga A.M."/>
            <person name="Wang H."/>
            <person name="Holden M.T.G."/>
            <person name="Wright A."/>
            <person name="Churcher C."/>
            <person name="Quail M.A."/>
            <person name="Baker S."/>
            <person name="Bason N."/>
            <person name="Brooks K."/>
            <person name="Chillingworth T."/>
            <person name="Cronin A."/>
            <person name="Davis P."/>
            <person name="Dowd L."/>
            <person name="Fraser A."/>
            <person name="Feltwell T."/>
            <person name="Hance Z."/>
            <person name="Holroyd S."/>
            <person name="Jagels K."/>
            <person name="Moule S."/>
            <person name="Mungall K."/>
            <person name="Price C."/>
            <person name="Rabbinowitsch E."/>
            <person name="Sharp S."/>
            <person name="Simmonds M."/>
            <person name="Stevens K."/>
            <person name="Unwin L."/>
            <person name="Whithead S."/>
            <person name="Dupuy B."/>
            <person name="Dougan G."/>
            <person name="Barrell B."/>
            <person name="Parkhill J."/>
        </authorList>
    </citation>
    <scope>NUCLEOTIDE SEQUENCE [LARGE SCALE GENOMIC DNA]</scope>
    <source>
        <strain>630</strain>
    </source>
</reference>
<evidence type="ECO:0000255" key="1">
    <source>
        <dbReference type="HAMAP-Rule" id="MF_01274"/>
    </source>
</evidence>
<keyword id="KW-0067">ATP-binding</keyword>
<keyword id="KW-0173">Coenzyme A biosynthesis</keyword>
<keyword id="KW-0963">Cytoplasm</keyword>
<keyword id="KW-0418">Kinase</keyword>
<keyword id="KW-0479">Metal-binding</keyword>
<keyword id="KW-0547">Nucleotide-binding</keyword>
<keyword id="KW-0630">Potassium</keyword>
<keyword id="KW-1185">Reference proteome</keyword>
<keyword id="KW-0808">Transferase</keyword>
<proteinExistence type="inferred from homology"/>